<gene>
    <name type="primary">ss18l1</name>
    <name type="synonym">crest</name>
</gene>
<sequence>MSVAFASARPRGKGEVTQQTIQKMLDENHHLIQCIMDYQSKGKTAECTQYQQILHRNLVYLATIADSNQNMQSLLPAPPTQNMNLGPGGMSQTGPSQTLHSQGNLSEALGSSLPPSSIMQGQISNGPNHVSMQQSGQTTLPTTTMSMAVSTHGSAPGYSHTVPSSQNVPMQNQGSIGNYVSRANMNMPSNPVTMMHQQATSSHYTSAQAGSQHYQGQPSIAMMNQSSQGSSMMGQRPLGPYRPSQQGSSQQYLGQEEYYSEQYGHSQGSSEAMTPQYYTDAGHGDYSYQQSSYGEQSYERTFEDSSQHYYEGGNAQYSQQQTGYQQGSGQQQAYSQQQYSNQQNYPGQQQGYVPAQGASSQYSGYQQGQGQQYASYRTSQTTSTAQQQRPYGYEQGQYGNYQQ</sequence>
<dbReference type="EMBL" id="BC077557">
    <property type="protein sequence ID" value="AAH77557.1"/>
    <property type="molecule type" value="mRNA"/>
</dbReference>
<dbReference type="RefSeq" id="NP_001087101.1">
    <property type="nucleotide sequence ID" value="NM_001093632.1"/>
</dbReference>
<dbReference type="SMR" id="Q6DDK1"/>
<dbReference type="DNASU" id="446990"/>
<dbReference type="GeneID" id="446990"/>
<dbReference type="KEGG" id="xla:446990"/>
<dbReference type="AGR" id="Xenbase:XB-GENE-993778"/>
<dbReference type="CTD" id="446990"/>
<dbReference type="Xenbase" id="XB-GENE-993778">
    <property type="gene designation" value="ss18l1.S"/>
</dbReference>
<dbReference type="OMA" id="XPAQGAP"/>
<dbReference type="OrthoDB" id="10265171at2759"/>
<dbReference type="Proteomes" id="UP000186698">
    <property type="component" value="Chromosome 9_10S"/>
</dbReference>
<dbReference type="Bgee" id="446990">
    <property type="expression patterns" value="Expressed in brain and 6 other cell types or tissues"/>
</dbReference>
<dbReference type="GO" id="GO:0005654">
    <property type="term" value="C:nucleoplasm"/>
    <property type="evidence" value="ECO:0007669"/>
    <property type="project" value="UniProtKB-ARBA"/>
</dbReference>
<dbReference type="GO" id="GO:0005634">
    <property type="term" value="C:nucleus"/>
    <property type="evidence" value="ECO:0000318"/>
    <property type="project" value="GO_Central"/>
</dbReference>
<dbReference type="GO" id="GO:0003713">
    <property type="term" value="F:transcription coactivator activity"/>
    <property type="evidence" value="ECO:0000318"/>
    <property type="project" value="GO_Central"/>
</dbReference>
<dbReference type="GO" id="GO:0006325">
    <property type="term" value="P:chromatin organization"/>
    <property type="evidence" value="ECO:0007669"/>
    <property type="project" value="UniProtKB-KW"/>
</dbReference>
<dbReference type="GO" id="GO:0050775">
    <property type="term" value="P:positive regulation of dendrite morphogenesis"/>
    <property type="evidence" value="ECO:0000318"/>
    <property type="project" value="GO_Central"/>
</dbReference>
<dbReference type="GO" id="GO:0045944">
    <property type="term" value="P:positive regulation of transcription by RNA polymerase II"/>
    <property type="evidence" value="ECO:0000318"/>
    <property type="project" value="GO_Central"/>
</dbReference>
<dbReference type="InterPro" id="IPR007726">
    <property type="entry name" value="SS18_N"/>
</dbReference>
<dbReference type="PANTHER" id="PTHR23107:SF21">
    <property type="entry name" value="CALCIUM-RESPONSIVE TRANSACTIVATOR"/>
    <property type="match status" value="1"/>
</dbReference>
<dbReference type="PANTHER" id="PTHR23107">
    <property type="entry name" value="SYNOVIAL SARCOMA ASSOCIATED SS18 PROTEIN"/>
    <property type="match status" value="1"/>
</dbReference>
<dbReference type="Pfam" id="PF05030">
    <property type="entry name" value="SSXT"/>
    <property type="match status" value="1"/>
</dbReference>
<comment type="function">
    <text evidence="1">Transcriptional activator which may be required for calcium-dependent dendritic growth and branching in cortical neurons.</text>
</comment>
<comment type="subunit">
    <text evidence="1">Homodimer.</text>
</comment>
<comment type="subcellular location">
    <subcellularLocation>
        <location evidence="1">Nucleus</location>
    </subcellularLocation>
    <text evidence="1">Localizes to nuclear bodies.</text>
</comment>
<comment type="domain">
    <text evidence="1">The MFD (multi-functional domain) domain is involved in transcription transactivation, nuclear body targeting and dimerization.</text>
</comment>
<comment type="similarity">
    <text evidence="4">Belongs to the SS18 family.</text>
</comment>
<protein>
    <recommendedName>
        <fullName>Calcium-responsive transactivator</fullName>
    </recommendedName>
    <alternativeName>
        <fullName>ss18-like protein 1</fullName>
    </alternativeName>
</protein>
<evidence type="ECO:0000250" key="1"/>
<evidence type="ECO:0000255" key="2"/>
<evidence type="ECO:0000256" key="3">
    <source>
        <dbReference type="SAM" id="MobiDB-lite"/>
    </source>
</evidence>
<evidence type="ECO:0000305" key="4"/>
<proteinExistence type="evidence at transcript level"/>
<accession>Q6DDK1</accession>
<name>CREST_XENLA</name>
<organism>
    <name type="scientific">Xenopus laevis</name>
    <name type="common">African clawed frog</name>
    <dbReference type="NCBI Taxonomy" id="8355"/>
    <lineage>
        <taxon>Eukaryota</taxon>
        <taxon>Metazoa</taxon>
        <taxon>Chordata</taxon>
        <taxon>Craniata</taxon>
        <taxon>Vertebrata</taxon>
        <taxon>Euteleostomi</taxon>
        <taxon>Amphibia</taxon>
        <taxon>Batrachia</taxon>
        <taxon>Anura</taxon>
        <taxon>Pipoidea</taxon>
        <taxon>Pipidae</taxon>
        <taxon>Xenopodinae</taxon>
        <taxon>Xenopus</taxon>
        <taxon>Xenopus</taxon>
    </lineage>
</organism>
<feature type="chain" id="PRO_0000391348" description="Calcium-responsive transactivator">
    <location>
        <begin position="1"/>
        <end position="403"/>
    </location>
</feature>
<feature type="region of interest" description="N-terminal auto-inhibitory domain">
    <location>
        <begin position="1"/>
        <end position="148"/>
    </location>
</feature>
<feature type="region of interest" description="Disordered" evidence="3">
    <location>
        <begin position="72"/>
        <end position="111"/>
    </location>
</feature>
<feature type="region of interest" description="Methionine-rich intra-molecular domain" evidence="1">
    <location>
        <begin position="149"/>
        <end position="238"/>
    </location>
</feature>
<feature type="region of interest" description="Disordered" evidence="3">
    <location>
        <begin position="152"/>
        <end position="171"/>
    </location>
</feature>
<feature type="region of interest" description="Disordered" evidence="3">
    <location>
        <begin position="224"/>
        <end position="303"/>
    </location>
</feature>
<feature type="region of interest" description="MFD domain" evidence="1">
    <location>
        <begin position="252"/>
        <end position="324"/>
    </location>
</feature>
<feature type="region of interest" description="Disordered" evidence="3">
    <location>
        <begin position="318"/>
        <end position="403"/>
    </location>
</feature>
<feature type="region of interest" description="Necessary for nuclear localization" evidence="1">
    <location>
        <begin position="341"/>
        <end position="403"/>
    </location>
</feature>
<feature type="short sequence motif" description="SH2-binding" evidence="2">
    <location>
        <begin position="50"/>
        <end position="53"/>
    </location>
</feature>
<feature type="short sequence motif" description="SH2-binding" evidence="2">
    <location>
        <begin position="360"/>
        <end position="363"/>
    </location>
</feature>
<feature type="short sequence motif" description="SH3-binding" evidence="2">
    <location>
        <begin position="378"/>
        <end position="386"/>
    </location>
</feature>
<feature type="short sequence motif" description="SH2-binding" evidence="2">
    <location>
        <begin position="398"/>
        <end position="401"/>
    </location>
</feature>
<feature type="compositionally biased region" description="Polar residues" evidence="3">
    <location>
        <begin position="92"/>
        <end position="105"/>
    </location>
</feature>
<feature type="compositionally biased region" description="Polar residues" evidence="3">
    <location>
        <begin position="161"/>
        <end position="171"/>
    </location>
</feature>
<feature type="compositionally biased region" description="Low complexity" evidence="3">
    <location>
        <begin position="224"/>
        <end position="235"/>
    </location>
</feature>
<feature type="compositionally biased region" description="Polar residues" evidence="3">
    <location>
        <begin position="263"/>
        <end position="277"/>
    </location>
</feature>
<feature type="compositionally biased region" description="Low complexity" evidence="3">
    <location>
        <begin position="286"/>
        <end position="296"/>
    </location>
</feature>
<keyword id="KW-0010">Activator</keyword>
<keyword id="KW-0106">Calcium</keyword>
<keyword id="KW-0156">Chromatin regulator</keyword>
<keyword id="KW-0539">Nucleus</keyword>
<keyword id="KW-1185">Reference proteome</keyword>
<keyword id="KW-0677">Repeat</keyword>
<keyword id="KW-0804">Transcription</keyword>
<keyword id="KW-0805">Transcription regulation</keyword>
<reference key="1">
    <citation type="submission" date="2004-07" db="EMBL/GenBank/DDBJ databases">
        <authorList>
            <consortium name="NIH - Xenopus Gene Collection (XGC) project"/>
        </authorList>
    </citation>
    <scope>NUCLEOTIDE SEQUENCE [LARGE SCALE MRNA]</scope>
    <source>
        <tissue>Eye</tissue>
    </source>
</reference>